<reference key="1">
    <citation type="journal article" date="2003" name="Genome Res.">
        <title>Genome sequence of an M3 strain of Streptococcus pyogenes reveals a large-scale genomic rearrangement in invasive strains and new insights into phage evolution.</title>
        <authorList>
            <person name="Nakagawa I."/>
            <person name="Kurokawa K."/>
            <person name="Yamashita A."/>
            <person name="Nakata M."/>
            <person name="Tomiyasu Y."/>
            <person name="Okahashi N."/>
            <person name="Kawabata S."/>
            <person name="Yamazaki K."/>
            <person name="Shiba T."/>
            <person name="Yasunaga T."/>
            <person name="Hayashi H."/>
            <person name="Hattori M."/>
            <person name="Hamada S."/>
        </authorList>
    </citation>
    <scope>NUCLEOTIDE SEQUENCE [LARGE SCALE GENOMIC DNA]</scope>
    <source>
        <strain>SSI-1</strain>
    </source>
</reference>
<organism>
    <name type="scientific">Streptococcus pyogenes serotype M3 (strain SSI-1)</name>
    <dbReference type="NCBI Taxonomy" id="193567"/>
    <lineage>
        <taxon>Bacteria</taxon>
        <taxon>Bacillati</taxon>
        <taxon>Bacillota</taxon>
        <taxon>Bacilli</taxon>
        <taxon>Lactobacillales</taxon>
        <taxon>Streptococcaceae</taxon>
        <taxon>Streptococcus</taxon>
    </lineage>
</organism>
<comment type="function">
    <text evidence="1">Catalyzes the condensation of carbamoyl phosphate and aspartate to form carbamoyl aspartate and inorganic phosphate, the committed step in the de novo pyrimidine nucleotide biosynthesis pathway.</text>
</comment>
<comment type="catalytic activity">
    <reaction evidence="1">
        <text>carbamoyl phosphate + L-aspartate = N-carbamoyl-L-aspartate + phosphate + H(+)</text>
        <dbReference type="Rhea" id="RHEA:20013"/>
        <dbReference type="ChEBI" id="CHEBI:15378"/>
        <dbReference type="ChEBI" id="CHEBI:29991"/>
        <dbReference type="ChEBI" id="CHEBI:32814"/>
        <dbReference type="ChEBI" id="CHEBI:43474"/>
        <dbReference type="ChEBI" id="CHEBI:58228"/>
        <dbReference type="EC" id="2.1.3.2"/>
    </reaction>
</comment>
<comment type="pathway">
    <text evidence="1">Pyrimidine metabolism; UMP biosynthesis via de novo pathway; (S)-dihydroorotate from bicarbonate: step 2/3.</text>
</comment>
<comment type="subunit">
    <text evidence="1">Heterododecamer (2C3:3R2) of six catalytic PyrB chains organized as two trimers (C3), and six regulatory PyrI chains organized as three dimers (R2).</text>
</comment>
<comment type="similarity">
    <text evidence="1">Belongs to the aspartate/ornithine carbamoyltransferase superfamily. ATCase family.</text>
</comment>
<comment type="sequence caution" evidence="2">
    <conflict type="erroneous initiation">
        <sequence resource="EMBL-CDS" id="BAC64389"/>
    </conflict>
</comment>
<name>PYRB_STRPQ</name>
<sequence>MSVVNNRVALTNLVSMEALTTEEVLGLINRGSEYKAGKVVISDHQKDLVANLFFENSTRTHKSFEVAEKKLGLTVLDFNADASAVNKGESLYDTVLTMSALGTDICVIRHPEDDYYKELVESPTITASIVNGGDGSGQHPSQCLLDLLTIYEEFGRFEGLKIAIAGDLTHSRVAKSNMQILKRLGAELYFYGPEEWYSEAFNAYGTYIAIDQIIKELDVLMLLRVQHERHDGHQSFSKEGYHQAFGLTQERYQQLKDSAIIMHPAPVNRDVEIADSLVEAPKARIVSQMANGVFVRMAIIEAILNGRNKNS</sequence>
<evidence type="ECO:0000255" key="1">
    <source>
        <dbReference type="HAMAP-Rule" id="MF_00001"/>
    </source>
</evidence>
<evidence type="ECO:0000305" key="2"/>
<keyword id="KW-0665">Pyrimidine biosynthesis</keyword>
<keyword id="KW-0808">Transferase</keyword>
<gene>
    <name evidence="1" type="primary">pyrB</name>
    <name type="ordered locus">SPs1294</name>
</gene>
<dbReference type="EC" id="2.1.3.2" evidence="1"/>
<dbReference type="EMBL" id="BA000034">
    <property type="protein sequence ID" value="BAC64389.1"/>
    <property type="status" value="ALT_INIT"/>
    <property type="molecule type" value="Genomic_DNA"/>
</dbReference>
<dbReference type="RefSeq" id="WP_004218947.1">
    <property type="nucleotide sequence ID" value="NC_004606.1"/>
</dbReference>
<dbReference type="SMR" id="P0DC85"/>
<dbReference type="KEGG" id="sps:SPs1294"/>
<dbReference type="HOGENOM" id="CLU_043846_2_1_9"/>
<dbReference type="UniPathway" id="UPA00070">
    <property type="reaction ID" value="UER00116"/>
</dbReference>
<dbReference type="GO" id="GO:0005829">
    <property type="term" value="C:cytosol"/>
    <property type="evidence" value="ECO:0007669"/>
    <property type="project" value="TreeGrafter"/>
</dbReference>
<dbReference type="GO" id="GO:0016597">
    <property type="term" value="F:amino acid binding"/>
    <property type="evidence" value="ECO:0007669"/>
    <property type="project" value="InterPro"/>
</dbReference>
<dbReference type="GO" id="GO:0004070">
    <property type="term" value="F:aspartate carbamoyltransferase activity"/>
    <property type="evidence" value="ECO:0007669"/>
    <property type="project" value="UniProtKB-UniRule"/>
</dbReference>
<dbReference type="GO" id="GO:0006207">
    <property type="term" value="P:'de novo' pyrimidine nucleobase biosynthetic process"/>
    <property type="evidence" value="ECO:0007669"/>
    <property type="project" value="InterPro"/>
</dbReference>
<dbReference type="GO" id="GO:0044205">
    <property type="term" value="P:'de novo' UMP biosynthetic process"/>
    <property type="evidence" value="ECO:0007669"/>
    <property type="project" value="UniProtKB-UniRule"/>
</dbReference>
<dbReference type="GO" id="GO:0006520">
    <property type="term" value="P:amino acid metabolic process"/>
    <property type="evidence" value="ECO:0007669"/>
    <property type="project" value="InterPro"/>
</dbReference>
<dbReference type="FunFam" id="3.40.50.1370:FF:000011">
    <property type="entry name" value="Aspartate carbamoyltransferase"/>
    <property type="match status" value="1"/>
</dbReference>
<dbReference type="Gene3D" id="3.40.50.1370">
    <property type="entry name" value="Aspartate/ornithine carbamoyltransferase"/>
    <property type="match status" value="2"/>
</dbReference>
<dbReference type="HAMAP" id="MF_00001">
    <property type="entry name" value="Asp_carb_tr"/>
    <property type="match status" value="1"/>
</dbReference>
<dbReference type="InterPro" id="IPR006132">
    <property type="entry name" value="Asp/Orn_carbamoyltranf_P-bd"/>
</dbReference>
<dbReference type="InterPro" id="IPR006130">
    <property type="entry name" value="Asp/Orn_carbamoylTrfase"/>
</dbReference>
<dbReference type="InterPro" id="IPR036901">
    <property type="entry name" value="Asp/Orn_carbamoylTrfase_sf"/>
</dbReference>
<dbReference type="InterPro" id="IPR002082">
    <property type="entry name" value="Asp_carbamoyltransf"/>
</dbReference>
<dbReference type="InterPro" id="IPR006131">
    <property type="entry name" value="Asp_carbamoyltransf_Asp/Orn-bd"/>
</dbReference>
<dbReference type="NCBIfam" id="TIGR00670">
    <property type="entry name" value="asp_carb_tr"/>
    <property type="match status" value="1"/>
</dbReference>
<dbReference type="NCBIfam" id="NF002032">
    <property type="entry name" value="PRK00856.1"/>
    <property type="match status" value="1"/>
</dbReference>
<dbReference type="PANTHER" id="PTHR45753:SF6">
    <property type="entry name" value="ASPARTATE CARBAMOYLTRANSFERASE"/>
    <property type="match status" value="1"/>
</dbReference>
<dbReference type="PANTHER" id="PTHR45753">
    <property type="entry name" value="ORNITHINE CARBAMOYLTRANSFERASE, MITOCHONDRIAL"/>
    <property type="match status" value="1"/>
</dbReference>
<dbReference type="Pfam" id="PF00185">
    <property type="entry name" value="OTCace"/>
    <property type="match status" value="1"/>
</dbReference>
<dbReference type="Pfam" id="PF02729">
    <property type="entry name" value="OTCace_N"/>
    <property type="match status" value="1"/>
</dbReference>
<dbReference type="PRINTS" id="PR00100">
    <property type="entry name" value="AOTCASE"/>
</dbReference>
<dbReference type="PRINTS" id="PR00101">
    <property type="entry name" value="ATCASE"/>
</dbReference>
<dbReference type="SUPFAM" id="SSF53671">
    <property type="entry name" value="Aspartate/ornithine carbamoyltransferase"/>
    <property type="match status" value="1"/>
</dbReference>
<dbReference type="PROSITE" id="PS00097">
    <property type="entry name" value="CARBAMOYLTRANSFERASE"/>
    <property type="match status" value="1"/>
</dbReference>
<accession>P0DC85</accession>
<accession>P65621</accession>
<accession>Q9A0C8</accession>
<protein>
    <recommendedName>
        <fullName evidence="1">Aspartate carbamoyltransferase catalytic subunit</fullName>
        <ecNumber evidence="1">2.1.3.2</ecNumber>
    </recommendedName>
    <alternativeName>
        <fullName evidence="1">Aspartate transcarbamylase</fullName>
        <shortName evidence="1">ATCase</shortName>
    </alternativeName>
</protein>
<feature type="chain" id="PRO_0000411430" description="Aspartate carbamoyltransferase catalytic subunit">
    <location>
        <begin position="1"/>
        <end position="311"/>
    </location>
</feature>
<feature type="binding site" evidence="1">
    <location>
        <position position="59"/>
    </location>
    <ligand>
        <name>carbamoyl phosphate</name>
        <dbReference type="ChEBI" id="CHEBI:58228"/>
    </ligand>
</feature>
<feature type="binding site" evidence="1">
    <location>
        <position position="60"/>
    </location>
    <ligand>
        <name>carbamoyl phosphate</name>
        <dbReference type="ChEBI" id="CHEBI:58228"/>
    </ligand>
</feature>
<feature type="binding site" evidence="1">
    <location>
        <position position="87"/>
    </location>
    <ligand>
        <name>L-aspartate</name>
        <dbReference type="ChEBI" id="CHEBI:29991"/>
    </ligand>
</feature>
<feature type="binding site" evidence="1">
    <location>
        <position position="109"/>
    </location>
    <ligand>
        <name>carbamoyl phosphate</name>
        <dbReference type="ChEBI" id="CHEBI:58228"/>
    </ligand>
</feature>
<feature type="binding site" evidence="1">
    <location>
        <position position="139"/>
    </location>
    <ligand>
        <name>carbamoyl phosphate</name>
        <dbReference type="ChEBI" id="CHEBI:58228"/>
    </ligand>
</feature>
<feature type="binding site" evidence="1">
    <location>
        <position position="142"/>
    </location>
    <ligand>
        <name>carbamoyl phosphate</name>
        <dbReference type="ChEBI" id="CHEBI:58228"/>
    </ligand>
</feature>
<feature type="binding site" evidence="1">
    <location>
        <position position="172"/>
    </location>
    <ligand>
        <name>L-aspartate</name>
        <dbReference type="ChEBI" id="CHEBI:29991"/>
    </ligand>
</feature>
<feature type="binding site" evidence="1">
    <location>
        <position position="224"/>
    </location>
    <ligand>
        <name>L-aspartate</name>
        <dbReference type="ChEBI" id="CHEBI:29991"/>
    </ligand>
</feature>
<feature type="binding site" evidence="1">
    <location>
        <position position="265"/>
    </location>
    <ligand>
        <name>carbamoyl phosphate</name>
        <dbReference type="ChEBI" id="CHEBI:58228"/>
    </ligand>
</feature>
<feature type="binding site" evidence="1">
    <location>
        <position position="266"/>
    </location>
    <ligand>
        <name>carbamoyl phosphate</name>
        <dbReference type="ChEBI" id="CHEBI:58228"/>
    </ligand>
</feature>
<proteinExistence type="inferred from homology"/>